<keyword id="KW-0963">Cytoplasm</keyword>
<keyword id="KW-0269">Exonuclease</keyword>
<keyword id="KW-0378">Hydrolase</keyword>
<keyword id="KW-0540">Nuclease</keyword>
<keyword id="KW-1185">Reference proteome</keyword>
<evidence type="ECO:0000255" key="1">
    <source>
        <dbReference type="HAMAP-Rule" id="MF_00337"/>
    </source>
</evidence>
<accession>Q04KB1</accession>
<organism>
    <name type="scientific">Streptococcus pneumoniae serotype 2 (strain D39 / NCTC 7466)</name>
    <dbReference type="NCBI Taxonomy" id="373153"/>
    <lineage>
        <taxon>Bacteria</taxon>
        <taxon>Bacillati</taxon>
        <taxon>Bacillota</taxon>
        <taxon>Bacilli</taxon>
        <taxon>Lactobacillales</taxon>
        <taxon>Streptococcaceae</taxon>
        <taxon>Streptococcus</taxon>
    </lineage>
</organism>
<protein>
    <recommendedName>
        <fullName evidence="1">Exodeoxyribonuclease 7 small subunit</fullName>
        <ecNumber evidence="1">3.1.11.6</ecNumber>
    </recommendedName>
    <alternativeName>
        <fullName evidence="1">Exodeoxyribonuclease VII small subunit</fullName>
        <shortName evidence="1">Exonuclease VII small subunit</shortName>
    </alternativeName>
</protein>
<proteinExistence type="inferred from homology"/>
<feature type="chain" id="PRO_0000303755" description="Exodeoxyribonuclease 7 small subunit">
    <location>
        <begin position="1"/>
        <end position="70"/>
    </location>
</feature>
<dbReference type="EC" id="3.1.11.6" evidence="1"/>
<dbReference type="EMBL" id="CP000410">
    <property type="protein sequence ID" value="ABJ54820.1"/>
    <property type="molecule type" value="Genomic_DNA"/>
</dbReference>
<dbReference type="RefSeq" id="WP_000043230.1">
    <property type="nucleotide sequence ID" value="NZ_JAMLJR010000006.1"/>
</dbReference>
<dbReference type="SMR" id="Q04KB1"/>
<dbReference type="PaxDb" id="373153-SPD_1066"/>
<dbReference type="KEGG" id="spd:SPD_1066"/>
<dbReference type="eggNOG" id="COG1722">
    <property type="taxonomic scope" value="Bacteria"/>
</dbReference>
<dbReference type="HOGENOM" id="CLU_145918_3_2_9"/>
<dbReference type="BioCyc" id="SPNE373153:G1G6V-1156-MONOMER"/>
<dbReference type="Proteomes" id="UP000001452">
    <property type="component" value="Chromosome"/>
</dbReference>
<dbReference type="GO" id="GO:0005829">
    <property type="term" value="C:cytosol"/>
    <property type="evidence" value="ECO:0007669"/>
    <property type="project" value="TreeGrafter"/>
</dbReference>
<dbReference type="GO" id="GO:0009318">
    <property type="term" value="C:exodeoxyribonuclease VII complex"/>
    <property type="evidence" value="ECO:0007669"/>
    <property type="project" value="InterPro"/>
</dbReference>
<dbReference type="GO" id="GO:0008855">
    <property type="term" value="F:exodeoxyribonuclease VII activity"/>
    <property type="evidence" value="ECO:0007669"/>
    <property type="project" value="UniProtKB-UniRule"/>
</dbReference>
<dbReference type="GO" id="GO:0006308">
    <property type="term" value="P:DNA catabolic process"/>
    <property type="evidence" value="ECO:0007669"/>
    <property type="project" value="UniProtKB-UniRule"/>
</dbReference>
<dbReference type="FunFam" id="1.10.287.1040:FF:000003">
    <property type="entry name" value="Exodeoxyribonuclease 7 small subunit"/>
    <property type="match status" value="1"/>
</dbReference>
<dbReference type="Gene3D" id="1.10.287.1040">
    <property type="entry name" value="Exonuclease VII, small subunit"/>
    <property type="match status" value="1"/>
</dbReference>
<dbReference type="HAMAP" id="MF_00337">
    <property type="entry name" value="Exonuc_7_S"/>
    <property type="match status" value="1"/>
</dbReference>
<dbReference type="InterPro" id="IPR003761">
    <property type="entry name" value="Exonuc_VII_S"/>
</dbReference>
<dbReference type="InterPro" id="IPR037004">
    <property type="entry name" value="Exonuc_VII_ssu_sf"/>
</dbReference>
<dbReference type="NCBIfam" id="NF002138">
    <property type="entry name" value="PRK00977.1-2"/>
    <property type="match status" value="1"/>
</dbReference>
<dbReference type="NCBIfam" id="TIGR01280">
    <property type="entry name" value="xseB"/>
    <property type="match status" value="1"/>
</dbReference>
<dbReference type="PANTHER" id="PTHR34137">
    <property type="entry name" value="EXODEOXYRIBONUCLEASE 7 SMALL SUBUNIT"/>
    <property type="match status" value="1"/>
</dbReference>
<dbReference type="PANTHER" id="PTHR34137:SF1">
    <property type="entry name" value="EXODEOXYRIBONUCLEASE 7 SMALL SUBUNIT"/>
    <property type="match status" value="1"/>
</dbReference>
<dbReference type="Pfam" id="PF02609">
    <property type="entry name" value="Exonuc_VII_S"/>
    <property type="match status" value="1"/>
</dbReference>
<dbReference type="PIRSF" id="PIRSF006488">
    <property type="entry name" value="Exonuc_VII_S"/>
    <property type="match status" value="1"/>
</dbReference>
<dbReference type="SUPFAM" id="SSF116842">
    <property type="entry name" value="XseB-like"/>
    <property type="match status" value="1"/>
</dbReference>
<gene>
    <name evidence="1" type="primary">xseB</name>
    <name type="ordered locus">SPD_1066</name>
</gene>
<comment type="function">
    <text evidence="1">Bidirectionally degrades single-stranded DNA into large acid-insoluble oligonucleotides, which are then degraded further into small acid-soluble oligonucleotides.</text>
</comment>
<comment type="catalytic activity">
    <reaction evidence="1">
        <text>Exonucleolytic cleavage in either 5'- to 3'- or 3'- to 5'-direction to yield nucleoside 5'-phosphates.</text>
        <dbReference type="EC" id="3.1.11.6"/>
    </reaction>
</comment>
<comment type="subunit">
    <text evidence="1">Heterooligomer composed of large and small subunits.</text>
</comment>
<comment type="subcellular location">
    <subcellularLocation>
        <location evidence="1">Cytoplasm</location>
    </subcellularLocation>
</comment>
<comment type="similarity">
    <text evidence="1">Belongs to the XseB family.</text>
</comment>
<name>EX7S_STRP2</name>
<sequence>MSKQKKFEENLAELETIVQSLENGEIALEDAITAFQKGMVLSKELQATLDKAEKTLVKVMQEDGTESDFE</sequence>
<reference key="1">
    <citation type="journal article" date="2007" name="J. Bacteriol.">
        <title>Genome sequence of Avery's virulent serotype 2 strain D39 of Streptococcus pneumoniae and comparison with that of unencapsulated laboratory strain R6.</title>
        <authorList>
            <person name="Lanie J.A."/>
            <person name="Ng W.-L."/>
            <person name="Kazmierczak K.M."/>
            <person name="Andrzejewski T.M."/>
            <person name="Davidsen T.M."/>
            <person name="Wayne K.J."/>
            <person name="Tettelin H."/>
            <person name="Glass J.I."/>
            <person name="Winkler M.E."/>
        </authorList>
    </citation>
    <scope>NUCLEOTIDE SEQUENCE [LARGE SCALE GENOMIC DNA]</scope>
    <source>
        <strain>D39 / NCTC 7466</strain>
    </source>
</reference>